<comment type="function">
    <text evidence="1">Forms part of the ribosomal stalk which helps the ribosome interact with GTP-bound translation factors.</text>
</comment>
<comment type="subunit">
    <text evidence="1">Part of the ribosomal stalk of the 50S ribosomal subunit. Interacts with L10 and the large rRNA to form the base of the stalk. L10 forms an elongated spine to which L12 dimers bind in a sequential fashion forming a multimeric L10(L12)X complex.</text>
</comment>
<comment type="PTM">
    <text evidence="1">One or more lysine residues are methylated.</text>
</comment>
<comment type="similarity">
    <text evidence="1">Belongs to the universal ribosomal protein uL11 family.</text>
</comment>
<gene>
    <name evidence="1" type="primary">rplK</name>
    <name type="synonym">relC</name>
    <name type="ordered locus">BP0010</name>
</gene>
<sequence length="143" mass="14856">MAKKIVGFIKLQVPAGKANPSPPIGPALGQRGLNIMEFCKAFNAKTQGMELGLPIPVVITAFADKSFTFIMKTPPATVLIKKASGVQKGSAKPHTDKVGTLTRAQAEEIAKTKQPDLTAADLDAAVRTIAGSARSMGITVEGG</sequence>
<proteinExistence type="inferred from homology"/>
<accession>Q7W0S3</accession>
<organism>
    <name type="scientific">Bordetella pertussis (strain Tohama I / ATCC BAA-589 / NCTC 13251)</name>
    <dbReference type="NCBI Taxonomy" id="257313"/>
    <lineage>
        <taxon>Bacteria</taxon>
        <taxon>Pseudomonadati</taxon>
        <taxon>Pseudomonadota</taxon>
        <taxon>Betaproteobacteria</taxon>
        <taxon>Burkholderiales</taxon>
        <taxon>Alcaligenaceae</taxon>
        <taxon>Bordetella</taxon>
    </lineage>
</organism>
<dbReference type="EMBL" id="BX640411">
    <property type="protein sequence ID" value="CAE40390.1"/>
    <property type="molecule type" value="Genomic_DNA"/>
</dbReference>
<dbReference type="RefSeq" id="NP_878928.1">
    <property type="nucleotide sequence ID" value="NC_002929.2"/>
</dbReference>
<dbReference type="RefSeq" id="WP_010929572.1">
    <property type="nucleotide sequence ID" value="NZ_CP039022.1"/>
</dbReference>
<dbReference type="SMR" id="Q7W0S3"/>
<dbReference type="STRING" id="257313.BP0010"/>
<dbReference type="PaxDb" id="257313-BP0010"/>
<dbReference type="GeneID" id="69599917"/>
<dbReference type="KEGG" id="bpe:BP0010"/>
<dbReference type="PATRIC" id="fig|257313.5.peg.11"/>
<dbReference type="eggNOG" id="COG0080">
    <property type="taxonomic scope" value="Bacteria"/>
</dbReference>
<dbReference type="HOGENOM" id="CLU_074237_2_0_4"/>
<dbReference type="Proteomes" id="UP000002676">
    <property type="component" value="Chromosome"/>
</dbReference>
<dbReference type="GO" id="GO:0022625">
    <property type="term" value="C:cytosolic large ribosomal subunit"/>
    <property type="evidence" value="ECO:0007669"/>
    <property type="project" value="TreeGrafter"/>
</dbReference>
<dbReference type="GO" id="GO:0070180">
    <property type="term" value="F:large ribosomal subunit rRNA binding"/>
    <property type="evidence" value="ECO:0007669"/>
    <property type="project" value="UniProtKB-UniRule"/>
</dbReference>
<dbReference type="GO" id="GO:0003735">
    <property type="term" value="F:structural constituent of ribosome"/>
    <property type="evidence" value="ECO:0007669"/>
    <property type="project" value="InterPro"/>
</dbReference>
<dbReference type="GO" id="GO:0006412">
    <property type="term" value="P:translation"/>
    <property type="evidence" value="ECO:0007669"/>
    <property type="project" value="UniProtKB-UniRule"/>
</dbReference>
<dbReference type="CDD" id="cd00349">
    <property type="entry name" value="Ribosomal_L11"/>
    <property type="match status" value="1"/>
</dbReference>
<dbReference type="FunFam" id="1.10.10.250:FF:000001">
    <property type="entry name" value="50S ribosomal protein L11"/>
    <property type="match status" value="1"/>
</dbReference>
<dbReference type="FunFam" id="3.30.1550.10:FF:000001">
    <property type="entry name" value="50S ribosomal protein L11"/>
    <property type="match status" value="1"/>
</dbReference>
<dbReference type="Gene3D" id="1.10.10.250">
    <property type="entry name" value="Ribosomal protein L11, C-terminal domain"/>
    <property type="match status" value="1"/>
</dbReference>
<dbReference type="Gene3D" id="3.30.1550.10">
    <property type="entry name" value="Ribosomal protein L11/L12, N-terminal domain"/>
    <property type="match status" value="1"/>
</dbReference>
<dbReference type="HAMAP" id="MF_00736">
    <property type="entry name" value="Ribosomal_uL11"/>
    <property type="match status" value="1"/>
</dbReference>
<dbReference type="InterPro" id="IPR000911">
    <property type="entry name" value="Ribosomal_uL11"/>
</dbReference>
<dbReference type="InterPro" id="IPR006519">
    <property type="entry name" value="Ribosomal_uL11_bac-typ"/>
</dbReference>
<dbReference type="InterPro" id="IPR020783">
    <property type="entry name" value="Ribosomal_uL11_C"/>
</dbReference>
<dbReference type="InterPro" id="IPR036769">
    <property type="entry name" value="Ribosomal_uL11_C_sf"/>
</dbReference>
<dbReference type="InterPro" id="IPR020785">
    <property type="entry name" value="Ribosomal_uL11_CS"/>
</dbReference>
<dbReference type="InterPro" id="IPR020784">
    <property type="entry name" value="Ribosomal_uL11_N"/>
</dbReference>
<dbReference type="InterPro" id="IPR036796">
    <property type="entry name" value="Ribosomal_uL11_N_sf"/>
</dbReference>
<dbReference type="NCBIfam" id="TIGR01632">
    <property type="entry name" value="L11_bact"/>
    <property type="match status" value="1"/>
</dbReference>
<dbReference type="PANTHER" id="PTHR11661">
    <property type="entry name" value="60S RIBOSOMAL PROTEIN L12"/>
    <property type="match status" value="1"/>
</dbReference>
<dbReference type="PANTHER" id="PTHR11661:SF1">
    <property type="entry name" value="LARGE RIBOSOMAL SUBUNIT PROTEIN UL11M"/>
    <property type="match status" value="1"/>
</dbReference>
<dbReference type="Pfam" id="PF00298">
    <property type="entry name" value="Ribosomal_L11"/>
    <property type="match status" value="1"/>
</dbReference>
<dbReference type="Pfam" id="PF03946">
    <property type="entry name" value="Ribosomal_L11_N"/>
    <property type="match status" value="1"/>
</dbReference>
<dbReference type="SMART" id="SM00649">
    <property type="entry name" value="RL11"/>
    <property type="match status" value="1"/>
</dbReference>
<dbReference type="SUPFAM" id="SSF54747">
    <property type="entry name" value="Ribosomal L11/L12e N-terminal domain"/>
    <property type="match status" value="1"/>
</dbReference>
<dbReference type="SUPFAM" id="SSF46906">
    <property type="entry name" value="Ribosomal protein L11, C-terminal domain"/>
    <property type="match status" value="1"/>
</dbReference>
<dbReference type="PROSITE" id="PS00359">
    <property type="entry name" value="RIBOSOMAL_L11"/>
    <property type="match status" value="1"/>
</dbReference>
<reference key="1">
    <citation type="journal article" date="2003" name="Nat. Genet.">
        <title>Comparative analysis of the genome sequences of Bordetella pertussis, Bordetella parapertussis and Bordetella bronchiseptica.</title>
        <authorList>
            <person name="Parkhill J."/>
            <person name="Sebaihia M."/>
            <person name="Preston A."/>
            <person name="Murphy L.D."/>
            <person name="Thomson N.R."/>
            <person name="Harris D.E."/>
            <person name="Holden M.T.G."/>
            <person name="Churcher C.M."/>
            <person name="Bentley S.D."/>
            <person name="Mungall K.L."/>
            <person name="Cerdeno-Tarraga A.-M."/>
            <person name="Temple L."/>
            <person name="James K.D."/>
            <person name="Harris B."/>
            <person name="Quail M.A."/>
            <person name="Achtman M."/>
            <person name="Atkin R."/>
            <person name="Baker S."/>
            <person name="Basham D."/>
            <person name="Bason N."/>
            <person name="Cherevach I."/>
            <person name="Chillingworth T."/>
            <person name="Collins M."/>
            <person name="Cronin A."/>
            <person name="Davis P."/>
            <person name="Doggett J."/>
            <person name="Feltwell T."/>
            <person name="Goble A."/>
            <person name="Hamlin N."/>
            <person name="Hauser H."/>
            <person name="Holroyd S."/>
            <person name="Jagels K."/>
            <person name="Leather S."/>
            <person name="Moule S."/>
            <person name="Norberczak H."/>
            <person name="O'Neil S."/>
            <person name="Ormond D."/>
            <person name="Price C."/>
            <person name="Rabbinowitsch E."/>
            <person name="Rutter S."/>
            <person name="Sanders M."/>
            <person name="Saunders D."/>
            <person name="Seeger K."/>
            <person name="Sharp S."/>
            <person name="Simmonds M."/>
            <person name="Skelton J."/>
            <person name="Squares R."/>
            <person name="Squares S."/>
            <person name="Stevens K."/>
            <person name="Unwin L."/>
            <person name="Whitehead S."/>
            <person name="Barrell B.G."/>
            <person name="Maskell D.J."/>
        </authorList>
    </citation>
    <scope>NUCLEOTIDE SEQUENCE [LARGE SCALE GENOMIC DNA]</scope>
    <source>
        <strain>Tohama I / ATCC BAA-589 / NCTC 13251</strain>
    </source>
</reference>
<name>RL11_BORPE</name>
<keyword id="KW-0488">Methylation</keyword>
<keyword id="KW-1185">Reference proteome</keyword>
<keyword id="KW-0687">Ribonucleoprotein</keyword>
<keyword id="KW-0689">Ribosomal protein</keyword>
<keyword id="KW-0694">RNA-binding</keyword>
<keyword id="KW-0699">rRNA-binding</keyword>
<feature type="chain" id="PRO_0000104255" description="Large ribosomal subunit protein uL11">
    <location>
        <begin position="1"/>
        <end position="143"/>
    </location>
</feature>
<evidence type="ECO:0000255" key="1">
    <source>
        <dbReference type="HAMAP-Rule" id="MF_00736"/>
    </source>
</evidence>
<evidence type="ECO:0000305" key="2"/>
<protein>
    <recommendedName>
        <fullName evidence="1">Large ribosomal subunit protein uL11</fullName>
    </recommendedName>
    <alternativeName>
        <fullName evidence="2">50S ribosomal protein L11</fullName>
    </alternativeName>
</protein>